<proteinExistence type="inferred from homology"/>
<comment type="function">
    <text evidence="1">ATPase required for the post-translational delivery of tail-anchored (TA) proteins to the endoplasmic reticulum. Recognizes and selectively binds the transmembrane domain of TA proteins in the cytosol. This complex then targets to the endoplasmic reticulum by membrane-bound receptors, where the tail-anchored protein is released for insertion. This process is regulated by ATP binding and hydrolysis. ATP binding drives the homodimer towards the closed dimer state, facilitating recognition of newly synthesized TA membrane proteins. ATP hydrolysis is required for insertion. Subsequently, the homodimer reverts towards the open dimer state, lowering its affinity for the membrane-bound receptor, and returning it to the cytosol to initiate a new round of targeting.</text>
</comment>
<comment type="subunit">
    <text evidence="1">Homodimer.</text>
</comment>
<comment type="subcellular location">
    <subcellularLocation>
        <location evidence="1">Cytoplasm</location>
    </subcellularLocation>
    <subcellularLocation>
        <location evidence="1">Endoplasmic reticulum</location>
    </subcellularLocation>
</comment>
<comment type="similarity">
    <text evidence="1">Belongs to the arsA ATPase family.</text>
</comment>
<protein>
    <recommendedName>
        <fullName evidence="1">ATPase get3</fullName>
        <ecNumber evidence="1">3.6.-.-</ecNumber>
    </recommendedName>
    <alternativeName>
        <fullName evidence="1">Arsenical pump-driving ATPase</fullName>
    </alternativeName>
    <alternativeName>
        <fullName evidence="1">Arsenite-stimulated ATPase</fullName>
    </alternativeName>
    <alternativeName>
        <fullName evidence="1">Golgi to ER traffic protein 3</fullName>
    </alternativeName>
    <alternativeName>
        <fullName evidence="1">Guided entry of tail-anchored proteins 3</fullName>
    </alternativeName>
</protein>
<evidence type="ECO:0000255" key="1">
    <source>
        <dbReference type="HAMAP-Rule" id="MF_03112"/>
    </source>
</evidence>
<gene>
    <name type="primary">get3</name>
    <name type="ORF">BC1G_09064</name>
    <name type="ORF">BCIN_09g00120</name>
</gene>
<feature type="chain" id="PRO_0000388194" description="ATPase get3">
    <location>
        <begin position="1"/>
        <end position="340"/>
    </location>
</feature>
<feature type="active site" evidence="1">
    <location>
        <position position="63"/>
    </location>
</feature>
<feature type="binding site" evidence="1">
    <location>
        <begin position="34"/>
        <end position="41"/>
    </location>
    <ligand>
        <name>ATP</name>
        <dbReference type="ChEBI" id="CHEBI:30616"/>
    </ligand>
</feature>
<feature type="binding site" evidence="1">
    <location>
        <position position="242"/>
    </location>
    <ligand>
        <name>ATP</name>
        <dbReference type="ChEBI" id="CHEBI:30616"/>
    </ligand>
</feature>
<feature type="binding site" evidence="1">
    <location>
        <position position="269"/>
    </location>
    <ligand>
        <name>ATP</name>
        <dbReference type="ChEBI" id="CHEBI:30616"/>
    </ligand>
</feature>
<feature type="binding site" evidence="1">
    <location>
        <position position="280"/>
    </location>
    <ligand>
        <name>Zn(2+)</name>
        <dbReference type="ChEBI" id="CHEBI:29105"/>
        <note>ligand shared between dimeric partners</note>
    </ligand>
</feature>
<feature type="binding site" evidence="1">
    <location>
        <position position="283"/>
    </location>
    <ligand>
        <name>Zn(2+)</name>
        <dbReference type="ChEBI" id="CHEBI:29105"/>
        <note>ligand shared between dimeric partners</note>
    </ligand>
</feature>
<sequence>MSTAVINTDDDQLEPTLQSILDQKSLRWIFVGGKGGVGKTTTSCSLAIQLAKVRRSVLLISTDPAHNLSDAFSQKFGKEARLINGFENLSAMEIDPNGSIQELMGQAEEGEGPAAGMGGMMQDLAFAIPGIDEAMSFAEVLKQVKSLSYETIIFDTAPTGHTLRFLQFPTVLEKALAKVSQLSTQFGPMLNGLLGANGSLPNGQNLNEMMEKLEGLRETISEVNGQFKDENLTTFVCVCIPEFLSLYETERMIQELGSYHIDTHCIVVNQLLFPKKGSDCDQCNARRKMQKKYLEQIEELYDEFNVVKMPLLVEEVRGKERLEKFSEMLITPYVPPAGGL</sequence>
<reference key="1">
    <citation type="journal article" date="2011" name="PLoS Genet.">
        <title>Genomic analysis of the necrotrophic fungal pathogens Sclerotinia sclerotiorum and Botrytis cinerea.</title>
        <authorList>
            <person name="Amselem J."/>
            <person name="Cuomo C.A."/>
            <person name="van Kan J.A.L."/>
            <person name="Viaud M."/>
            <person name="Benito E.P."/>
            <person name="Couloux A."/>
            <person name="Coutinho P.M."/>
            <person name="de Vries R.P."/>
            <person name="Dyer P.S."/>
            <person name="Fillinger S."/>
            <person name="Fournier E."/>
            <person name="Gout L."/>
            <person name="Hahn M."/>
            <person name="Kohn L."/>
            <person name="Lapalu N."/>
            <person name="Plummer K.M."/>
            <person name="Pradier J.-M."/>
            <person name="Quevillon E."/>
            <person name="Sharon A."/>
            <person name="Simon A."/>
            <person name="ten Have A."/>
            <person name="Tudzynski B."/>
            <person name="Tudzynski P."/>
            <person name="Wincker P."/>
            <person name="Andrew M."/>
            <person name="Anthouard V."/>
            <person name="Beever R.E."/>
            <person name="Beffa R."/>
            <person name="Benoit I."/>
            <person name="Bouzid O."/>
            <person name="Brault B."/>
            <person name="Chen Z."/>
            <person name="Choquer M."/>
            <person name="Collemare J."/>
            <person name="Cotton P."/>
            <person name="Danchin E.G."/>
            <person name="Da Silva C."/>
            <person name="Gautier A."/>
            <person name="Giraud C."/>
            <person name="Giraud T."/>
            <person name="Gonzalez C."/>
            <person name="Grossetete S."/>
            <person name="Gueldener U."/>
            <person name="Henrissat B."/>
            <person name="Howlett B.J."/>
            <person name="Kodira C."/>
            <person name="Kretschmer M."/>
            <person name="Lappartient A."/>
            <person name="Leroch M."/>
            <person name="Levis C."/>
            <person name="Mauceli E."/>
            <person name="Neuveglise C."/>
            <person name="Oeser B."/>
            <person name="Pearson M."/>
            <person name="Poulain J."/>
            <person name="Poussereau N."/>
            <person name="Quesneville H."/>
            <person name="Rascle C."/>
            <person name="Schumacher J."/>
            <person name="Segurens B."/>
            <person name="Sexton A."/>
            <person name="Silva E."/>
            <person name="Sirven C."/>
            <person name="Soanes D.M."/>
            <person name="Talbot N.J."/>
            <person name="Templeton M."/>
            <person name="Yandava C."/>
            <person name="Yarden O."/>
            <person name="Zeng Q."/>
            <person name="Rollins J.A."/>
            <person name="Lebrun M.-H."/>
            <person name="Dickman M."/>
        </authorList>
    </citation>
    <scope>NUCLEOTIDE SEQUENCE [LARGE SCALE GENOMIC DNA]</scope>
    <source>
        <strain>B05.10</strain>
    </source>
</reference>
<reference key="2">
    <citation type="journal article" date="2012" name="Eukaryot. Cell">
        <title>Genome update of Botrytis cinerea strains B05.10 and T4.</title>
        <authorList>
            <person name="Staats M."/>
            <person name="van Kan J.A.L."/>
        </authorList>
    </citation>
    <scope>NUCLEOTIDE SEQUENCE [LARGE SCALE GENOMIC DNA]</scope>
    <scope>GENOME REANNOTATION</scope>
    <source>
        <strain>B05.10</strain>
    </source>
</reference>
<reference key="3">
    <citation type="journal article" date="2017" name="Mol. Plant Pathol.">
        <title>A gapless genome sequence of the fungus Botrytis cinerea.</title>
        <authorList>
            <person name="van Kan J.A.L."/>
            <person name="Stassen J.H.M."/>
            <person name="Mosbach A."/>
            <person name="van der Lee T.A.J."/>
            <person name="Faino L."/>
            <person name="Farmer A.D."/>
            <person name="Papasotiriou D.G."/>
            <person name="Zhou S."/>
            <person name="Seidl M.F."/>
            <person name="Cottam E."/>
            <person name="Edel D."/>
            <person name="Hahn M."/>
            <person name="Schwartz D.C."/>
            <person name="Dietrich R.A."/>
            <person name="Widdison S."/>
            <person name="Scalliet G."/>
        </authorList>
    </citation>
    <scope>NUCLEOTIDE SEQUENCE [LARGE SCALE GENOMIC DNA]</scope>
    <scope>GENOME REANNOTATION</scope>
    <source>
        <strain>B05.10</strain>
    </source>
</reference>
<accession>A6S7T2</accession>
<accession>A0A384JRG1</accession>
<organism>
    <name type="scientific">Botryotinia fuckeliana (strain B05.10)</name>
    <name type="common">Noble rot fungus</name>
    <name type="synonym">Botrytis cinerea</name>
    <dbReference type="NCBI Taxonomy" id="332648"/>
    <lineage>
        <taxon>Eukaryota</taxon>
        <taxon>Fungi</taxon>
        <taxon>Dikarya</taxon>
        <taxon>Ascomycota</taxon>
        <taxon>Pezizomycotina</taxon>
        <taxon>Leotiomycetes</taxon>
        <taxon>Helotiales</taxon>
        <taxon>Sclerotiniaceae</taxon>
        <taxon>Botrytis</taxon>
    </lineage>
</organism>
<keyword id="KW-0067">ATP-binding</keyword>
<keyword id="KW-0963">Cytoplasm</keyword>
<keyword id="KW-0256">Endoplasmic reticulum</keyword>
<keyword id="KW-0378">Hydrolase</keyword>
<keyword id="KW-0479">Metal-binding</keyword>
<keyword id="KW-0547">Nucleotide-binding</keyword>
<keyword id="KW-1185">Reference proteome</keyword>
<keyword id="KW-0813">Transport</keyword>
<keyword id="KW-0862">Zinc</keyword>
<name>GET3_BOTFB</name>
<dbReference type="EC" id="3.6.-.-" evidence="1"/>
<dbReference type="EMBL" id="CP009813">
    <property type="protein sequence ID" value="ATZ53123.1"/>
    <property type="molecule type" value="Genomic_DNA"/>
</dbReference>
<dbReference type="SMR" id="A6S7T2"/>
<dbReference type="EnsemblFungi" id="Bcin09g00120.1">
    <property type="protein sequence ID" value="Bcin09p00120.1"/>
    <property type="gene ID" value="Bcin09g00120"/>
</dbReference>
<dbReference type="GeneID" id="5433113"/>
<dbReference type="KEGG" id="bfu:BCIN_09g00120"/>
<dbReference type="VEuPathDB" id="FungiDB:Bcin09g00120"/>
<dbReference type="OMA" id="MDAPYEF"/>
<dbReference type="OrthoDB" id="1770at2759"/>
<dbReference type="Proteomes" id="UP000001798">
    <property type="component" value="Chromosome bcin09"/>
</dbReference>
<dbReference type="GO" id="GO:0043529">
    <property type="term" value="C:GET complex"/>
    <property type="evidence" value="ECO:0007669"/>
    <property type="project" value="EnsemblFungi"/>
</dbReference>
<dbReference type="GO" id="GO:0005524">
    <property type="term" value="F:ATP binding"/>
    <property type="evidence" value="ECO:0007669"/>
    <property type="project" value="UniProtKB-UniRule"/>
</dbReference>
<dbReference type="GO" id="GO:0016887">
    <property type="term" value="F:ATP hydrolysis activity"/>
    <property type="evidence" value="ECO:0007669"/>
    <property type="project" value="EnsemblFungi"/>
</dbReference>
<dbReference type="GO" id="GO:0005085">
    <property type="term" value="F:guanyl-nucleotide exchange factor activity"/>
    <property type="evidence" value="ECO:0007669"/>
    <property type="project" value="EnsemblFungi"/>
</dbReference>
<dbReference type="GO" id="GO:0042802">
    <property type="term" value="F:identical protein binding"/>
    <property type="evidence" value="ECO:0007669"/>
    <property type="project" value="EnsemblFungi"/>
</dbReference>
<dbReference type="GO" id="GO:0046872">
    <property type="term" value="F:metal ion binding"/>
    <property type="evidence" value="ECO:0007669"/>
    <property type="project" value="UniProtKB-KW"/>
</dbReference>
<dbReference type="GO" id="GO:0044183">
    <property type="term" value="F:protein folding chaperone"/>
    <property type="evidence" value="ECO:0007669"/>
    <property type="project" value="EnsemblFungi"/>
</dbReference>
<dbReference type="GO" id="GO:0051082">
    <property type="term" value="F:unfolded protein binding"/>
    <property type="evidence" value="ECO:0007669"/>
    <property type="project" value="EnsemblFungi"/>
</dbReference>
<dbReference type="GO" id="GO:0034599">
    <property type="term" value="P:cellular response to oxidative stress"/>
    <property type="evidence" value="ECO:0007669"/>
    <property type="project" value="EnsemblFungi"/>
</dbReference>
<dbReference type="GO" id="GO:0000750">
    <property type="term" value="P:pheromone-dependent signal transduction involved in conjugation with cellular fusion"/>
    <property type="evidence" value="ECO:0007669"/>
    <property type="project" value="EnsemblFungi"/>
</dbReference>
<dbReference type="GO" id="GO:0006620">
    <property type="term" value="P:post-translational protein targeting to endoplasmic reticulum membrane"/>
    <property type="evidence" value="ECO:0007669"/>
    <property type="project" value="EnsemblFungi"/>
</dbReference>
<dbReference type="GO" id="GO:0009408">
    <property type="term" value="P:response to heat"/>
    <property type="evidence" value="ECO:0007669"/>
    <property type="project" value="EnsemblFungi"/>
</dbReference>
<dbReference type="GO" id="GO:0010038">
    <property type="term" value="P:response to metal ion"/>
    <property type="evidence" value="ECO:0007669"/>
    <property type="project" value="EnsemblFungi"/>
</dbReference>
<dbReference type="GO" id="GO:0006890">
    <property type="term" value="P:retrograde vesicle-mediated transport, Golgi to endoplasmic reticulum"/>
    <property type="evidence" value="ECO:0007669"/>
    <property type="project" value="EnsemblFungi"/>
</dbReference>
<dbReference type="GO" id="GO:0071816">
    <property type="term" value="P:tail-anchored membrane protein insertion into ER membrane"/>
    <property type="evidence" value="ECO:0007669"/>
    <property type="project" value="EnsemblFungi"/>
</dbReference>
<dbReference type="CDD" id="cd02035">
    <property type="entry name" value="ArsA"/>
    <property type="match status" value="1"/>
</dbReference>
<dbReference type="FunFam" id="3.40.50.300:FF:000235">
    <property type="entry name" value="ATPase ASNA1"/>
    <property type="match status" value="1"/>
</dbReference>
<dbReference type="Gene3D" id="3.40.50.300">
    <property type="entry name" value="P-loop containing nucleotide triphosphate hydrolases"/>
    <property type="match status" value="1"/>
</dbReference>
<dbReference type="HAMAP" id="MF_03112">
    <property type="entry name" value="Asna1_Get3"/>
    <property type="match status" value="1"/>
</dbReference>
<dbReference type="InterPro" id="IPR025723">
    <property type="entry name" value="Anion-transp_ATPase-like_dom"/>
</dbReference>
<dbReference type="InterPro" id="IPR016300">
    <property type="entry name" value="ATPase_ArsA/GET3"/>
</dbReference>
<dbReference type="InterPro" id="IPR027542">
    <property type="entry name" value="ATPase_ArsA/GET3_euk"/>
</dbReference>
<dbReference type="InterPro" id="IPR027417">
    <property type="entry name" value="P-loop_NTPase"/>
</dbReference>
<dbReference type="NCBIfam" id="TIGR00345">
    <property type="entry name" value="GET3_arsA_TRC40"/>
    <property type="match status" value="1"/>
</dbReference>
<dbReference type="PANTHER" id="PTHR10803">
    <property type="entry name" value="ARSENICAL PUMP-DRIVING ATPASE ARSENITE-TRANSLOCATING ATPASE"/>
    <property type="match status" value="1"/>
</dbReference>
<dbReference type="PANTHER" id="PTHR10803:SF3">
    <property type="entry name" value="ATPASE GET3"/>
    <property type="match status" value="1"/>
</dbReference>
<dbReference type="Pfam" id="PF02374">
    <property type="entry name" value="ArsA_ATPase"/>
    <property type="match status" value="1"/>
</dbReference>
<dbReference type="SUPFAM" id="SSF52540">
    <property type="entry name" value="P-loop containing nucleoside triphosphate hydrolases"/>
    <property type="match status" value="1"/>
</dbReference>